<proteinExistence type="evidence at protein level"/>
<accession>Q54T86</accession>
<accession>Q86SB0</accession>
<feature type="chain" id="PRO_0000293628" description="WW domain-containing protein A">
    <location>
        <begin position="1"/>
        <end position="568"/>
    </location>
</feature>
<feature type="domain" description="C2" evidence="1">
    <location>
        <begin position="6"/>
        <end position="129"/>
    </location>
</feature>
<feature type="domain" description="WW 1" evidence="2">
    <location>
        <begin position="325"/>
        <end position="359"/>
    </location>
</feature>
<feature type="domain" description="WW 2" evidence="2">
    <location>
        <begin position="519"/>
        <end position="552"/>
    </location>
</feature>
<feature type="region of interest" description="Disordered" evidence="3">
    <location>
        <begin position="376"/>
        <end position="461"/>
    </location>
</feature>
<feature type="compositionally biased region" description="Low complexity" evidence="3">
    <location>
        <begin position="380"/>
        <end position="418"/>
    </location>
</feature>
<feature type="compositionally biased region" description="Basic and acidic residues" evidence="3">
    <location>
        <begin position="435"/>
        <end position="451"/>
    </location>
</feature>
<feature type="sequence conflict" description="In Ref. 1; BAC56858." evidence="6" ref="1">
    <original>L</original>
    <variation>S</variation>
    <location>
        <position position="209"/>
    </location>
</feature>
<organism>
    <name type="scientific">Dictyostelium discoideum</name>
    <name type="common">Social amoeba</name>
    <dbReference type="NCBI Taxonomy" id="44689"/>
    <lineage>
        <taxon>Eukaryota</taxon>
        <taxon>Amoebozoa</taxon>
        <taxon>Evosea</taxon>
        <taxon>Eumycetozoa</taxon>
        <taxon>Dictyostelia</taxon>
        <taxon>Dictyosteliales</taxon>
        <taxon>Dictyosteliaceae</taxon>
        <taxon>Dictyostelium</taxon>
    </lineage>
</organism>
<reference evidence="6 7" key="1">
    <citation type="journal article" date="2004" name="Mol. Biol. Cell">
        <title>DWWA, a novel protein containing two WW domains and an IQ motif, is required for scission of the residual cytoplasmic bridge during cytokinesis in Dictyostelium.</title>
        <authorList>
            <person name="Nagasaki A."/>
            <person name="Uyeda T.Q.P."/>
        </authorList>
    </citation>
    <scope>NUCLEOTIDE SEQUENCE [MRNA]</scope>
    <scope>FUNCTION</scope>
    <scope>INTERACTION WITH CALMODULIN</scope>
    <scope>SUBCELLULAR LOCATION</scope>
    <scope>DEVELOPMENTAL STAGE</scope>
    <scope>DISRUPTION PHENOTYPE</scope>
    <source>
        <strain evidence="4">AX2</strain>
    </source>
</reference>
<reference evidence="6 8" key="2">
    <citation type="journal article" date="2005" name="Nature">
        <title>The genome of the social amoeba Dictyostelium discoideum.</title>
        <authorList>
            <person name="Eichinger L."/>
            <person name="Pachebat J.A."/>
            <person name="Gloeckner G."/>
            <person name="Rajandream M.A."/>
            <person name="Sucgang R."/>
            <person name="Berriman M."/>
            <person name="Song J."/>
            <person name="Olsen R."/>
            <person name="Szafranski K."/>
            <person name="Xu Q."/>
            <person name="Tunggal B."/>
            <person name="Kummerfeld S."/>
            <person name="Madera M."/>
            <person name="Konfortov B.A."/>
            <person name="Rivero F."/>
            <person name="Bankier A.T."/>
            <person name="Lehmann R."/>
            <person name="Hamlin N."/>
            <person name="Davies R."/>
            <person name="Gaudet P."/>
            <person name="Fey P."/>
            <person name="Pilcher K."/>
            <person name="Chen G."/>
            <person name="Saunders D."/>
            <person name="Sodergren E.J."/>
            <person name="Davis P."/>
            <person name="Kerhornou A."/>
            <person name="Nie X."/>
            <person name="Hall N."/>
            <person name="Anjard C."/>
            <person name="Hemphill L."/>
            <person name="Bason N."/>
            <person name="Farbrother P."/>
            <person name="Desany B."/>
            <person name="Just E."/>
            <person name="Morio T."/>
            <person name="Rost R."/>
            <person name="Churcher C.M."/>
            <person name="Cooper J."/>
            <person name="Haydock S."/>
            <person name="van Driessche N."/>
            <person name="Cronin A."/>
            <person name="Goodhead I."/>
            <person name="Muzny D.M."/>
            <person name="Mourier T."/>
            <person name="Pain A."/>
            <person name="Lu M."/>
            <person name="Harper D."/>
            <person name="Lindsay R."/>
            <person name="Hauser H."/>
            <person name="James K.D."/>
            <person name="Quiles M."/>
            <person name="Madan Babu M."/>
            <person name="Saito T."/>
            <person name="Buchrieser C."/>
            <person name="Wardroper A."/>
            <person name="Felder M."/>
            <person name="Thangavelu M."/>
            <person name="Johnson D."/>
            <person name="Knights A."/>
            <person name="Loulseged H."/>
            <person name="Mungall K.L."/>
            <person name="Oliver K."/>
            <person name="Price C."/>
            <person name="Quail M.A."/>
            <person name="Urushihara H."/>
            <person name="Hernandez J."/>
            <person name="Rabbinowitsch E."/>
            <person name="Steffen D."/>
            <person name="Sanders M."/>
            <person name="Ma J."/>
            <person name="Kohara Y."/>
            <person name="Sharp S."/>
            <person name="Simmonds M.N."/>
            <person name="Spiegler S."/>
            <person name="Tivey A."/>
            <person name="Sugano S."/>
            <person name="White B."/>
            <person name="Walker D."/>
            <person name="Woodward J.R."/>
            <person name="Winckler T."/>
            <person name="Tanaka Y."/>
            <person name="Shaulsky G."/>
            <person name="Schleicher M."/>
            <person name="Weinstock G.M."/>
            <person name="Rosenthal A."/>
            <person name="Cox E.C."/>
            <person name="Chisholm R.L."/>
            <person name="Gibbs R.A."/>
            <person name="Loomis W.F."/>
            <person name="Platzer M."/>
            <person name="Kay R.R."/>
            <person name="Williams J.G."/>
            <person name="Dear P.H."/>
            <person name="Noegel A.A."/>
            <person name="Barrell B.G."/>
            <person name="Kuspa A."/>
        </authorList>
    </citation>
    <scope>NUCLEOTIDE SEQUENCE [LARGE SCALE GENOMIC DNA]</scope>
    <source>
        <strain evidence="5">AX4</strain>
    </source>
</reference>
<name>DWWA_DICDI</name>
<protein>
    <recommendedName>
        <fullName>WW domain-containing protein A</fullName>
    </recommendedName>
</protein>
<sequence length="568" mass="64751">MSNKNPLNNSNGSNSSTIVNSDKFLVKIHSLSVSHTSKSSNIYLVGDFDQFKQFKTETKKSSSTHGSCIYNEFAMEFQYETKYIHKLDHKHFKICVYKKKSIGSDKYIGSFGVDLYTLATGPISHDVVFQKDNTGVGRLQFRLEMNHITDIQISFKSILLSNLMKQSNYQIDYSLNKINPLKSSIIENTICPSWYNQSSILMNISLKDLVDGSIFFNLKDTKSSKVIGELKLPVKSIFSFVEGDIKIVKTLLYNEKQNKICDACIEIQFNNIPQLAQLRGGIQTEQGIRGAESFFSGVPLPKIIGEISNASTSDGYSKEAQLQHVKLPDGWESRIDPVSGKVFYLNHNNKTTSWISPLEHAPVKKRTPTVVISNTTILDNNNNNNNNNNNNNNNNNNNNNNINNTNNIQQKQQAQQQPVQPPPQPVQQQVQQPQQKEKEKEKEINAEDYKISRPKKTPATPEEAAVIIQRTFRNHKKQSYNKTIRNSKTIIPPNNVQQQQPQQTEKPSIYQVFGQQIDQGLPNGWEVRQDQFGRVFYVDHINRATTWTRPTVKHPKQHQQATLVQQRK</sequence>
<evidence type="ECO:0000255" key="1">
    <source>
        <dbReference type="PROSITE-ProRule" id="PRU00041"/>
    </source>
</evidence>
<evidence type="ECO:0000255" key="2">
    <source>
        <dbReference type="PROSITE-ProRule" id="PRU00224"/>
    </source>
</evidence>
<evidence type="ECO:0000256" key="3">
    <source>
        <dbReference type="SAM" id="MobiDB-lite"/>
    </source>
</evidence>
<evidence type="ECO:0000269" key="4">
    <source>
    </source>
</evidence>
<evidence type="ECO:0000269" key="5">
    <source>
    </source>
</evidence>
<evidence type="ECO:0000305" key="6"/>
<evidence type="ECO:0000312" key="7">
    <source>
        <dbReference type="EMBL" id="BAC56858.1"/>
    </source>
</evidence>
<evidence type="ECO:0000312" key="8">
    <source>
        <dbReference type="EMBL" id="EAL66473.1"/>
    </source>
</evidence>
<dbReference type="EMBL" id="AB089315">
    <property type="protein sequence ID" value="BAC56858.1"/>
    <property type="molecule type" value="mRNA"/>
</dbReference>
<dbReference type="EMBL" id="AAFI02000043">
    <property type="protein sequence ID" value="EAL66473.1"/>
    <property type="molecule type" value="Genomic_DNA"/>
</dbReference>
<dbReference type="RefSeq" id="XP_640503.1">
    <property type="nucleotide sequence ID" value="XM_635411.1"/>
</dbReference>
<dbReference type="FunCoup" id="Q54T86">
    <property type="interactions" value="41"/>
</dbReference>
<dbReference type="IntAct" id="Q54T86">
    <property type="interactions" value="1"/>
</dbReference>
<dbReference type="STRING" id="44689.Q54T86"/>
<dbReference type="PaxDb" id="44689-DDB0216188"/>
<dbReference type="EnsemblProtists" id="EAL66473">
    <property type="protein sequence ID" value="EAL66473"/>
    <property type="gene ID" value="DDB_G0281827"/>
</dbReference>
<dbReference type="GeneID" id="8623318"/>
<dbReference type="KEGG" id="ddi:DDB_G0281827"/>
<dbReference type="dictyBase" id="DDB_G0281827">
    <property type="gene designation" value="dwwA"/>
</dbReference>
<dbReference type="VEuPathDB" id="AmoebaDB:DDB_G0281827"/>
<dbReference type="eggNOG" id="KOG0940">
    <property type="taxonomic scope" value="Eukaryota"/>
</dbReference>
<dbReference type="HOGENOM" id="CLU_480156_0_0_1"/>
<dbReference type="InParanoid" id="Q54T86"/>
<dbReference type="OMA" id="IENTICP"/>
<dbReference type="PRO" id="PR:Q54T86"/>
<dbReference type="Proteomes" id="UP000002195">
    <property type="component" value="Chromosome 3"/>
</dbReference>
<dbReference type="GO" id="GO:0005938">
    <property type="term" value="C:cell cortex"/>
    <property type="evidence" value="ECO:0000314"/>
    <property type="project" value="dictyBase"/>
</dbReference>
<dbReference type="GO" id="GO:0005737">
    <property type="term" value="C:cytoplasm"/>
    <property type="evidence" value="ECO:0000318"/>
    <property type="project" value="GO_Central"/>
</dbReference>
<dbReference type="GO" id="GO:0005856">
    <property type="term" value="C:cytoskeleton"/>
    <property type="evidence" value="ECO:0007669"/>
    <property type="project" value="UniProtKB-SubCell"/>
</dbReference>
<dbReference type="GO" id="GO:0005730">
    <property type="term" value="C:nucleolus"/>
    <property type="evidence" value="ECO:0007669"/>
    <property type="project" value="UniProtKB-SubCell"/>
</dbReference>
<dbReference type="GO" id="GO:0005634">
    <property type="term" value="C:nucleus"/>
    <property type="evidence" value="ECO:0000314"/>
    <property type="project" value="dictyBase"/>
</dbReference>
<dbReference type="GO" id="GO:0005516">
    <property type="term" value="F:calmodulin binding"/>
    <property type="evidence" value="ECO:0000314"/>
    <property type="project" value="dictyBase"/>
</dbReference>
<dbReference type="GO" id="GO:0019900">
    <property type="term" value="F:kinase binding"/>
    <property type="evidence" value="ECO:0000318"/>
    <property type="project" value="GO_Central"/>
</dbReference>
<dbReference type="GO" id="GO:0060090">
    <property type="term" value="F:molecular adaptor activity"/>
    <property type="evidence" value="ECO:0000318"/>
    <property type="project" value="GO_Central"/>
</dbReference>
<dbReference type="GO" id="GO:0007015">
    <property type="term" value="P:actin filament organization"/>
    <property type="evidence" value="ECO:0000315"/>
    <property type="project" value="dictyBase"/>
</dbReference>
<dbReference type="GO" id="GO:0016477">
    <property type="term" value="P:cell migration"/>
    <property type="evidence" value="ECO:0000318"/>
    <property type="project" value="GO_Central"/>
</dbReference>
<dbReference type="GO" id="GO:0000281">
    <property type="term" value="P:mitotic cytokinesis"/>
    <property type="evidence" value="ECO:0000315"/>
    <property type="project" value="dictyBase"/>
</dbReference>
<dbReference type="GO" id="GO:0046621">
    <property type="term" value="P:negative regulation of organ growth"/>
    <property type="evidence" value="ECO:0000318"/>
    <property type="project" value="GO_Central"/>
</dbReference>
<dbReference type="GO" id="GO:0006355">
    <property type="term" value="P:regulation of DNA-templated transcription"/>
    <property type="evidence" value="ECO:0000318"/>
    <property type="project" value="GO_Central"/>
</dbReference>
<dbReference type="GO" id="GO:0035330">
    <property type="term" value="P:regulation of hippo signaling"/>
    <property type="evidence" value="ECO:0000318"/>
    <property type="project" value="GO_Central"/>
</dbReference>
<dbReference type="CDD" id="cd00030">
    <property type="entry name" value="C2"/>
    <property type="match status" value="1"/>
</dbReference>
<dbReference type="CDD" id="cd00201">
    <property type="entry name" value="WW"/>
    <property type="match status" value="2"/>
</dbReference>
<dbReference type="Gene3D" id="2.20.70.10">
    <property type="match status" value="2"/>
</dbReference>
<dbReference type="Gene3D" id="2.60.40.150">
    <property type="entry name" value="C2 domain"/>
    <property type="match status" value="1"/>
</dbReference>
<dbReference type="InterPro" id="IPR000008">
    <property type="entry name" value="C2_dom"/>
</dbReference>
<dbReference type="InterPro" id="IPR035892">
    <property type="entry name" value="C2_domain_sf"/>
</dbReference>
<dbReference type="InterPro" id="IPR001202">
    <property type="entry name" value="WW_dom"/>
</dbReference>
<dbReference type="InterPro" id="IPR036020">
    <property type="entry name" value="WW_dom_sf"/>
</dbReference>
<dbReference type="InterPro" id="IPR051583">
    <property type="entry name" value="YAP1"/>
</dbReference>
<dbReference type="PANTHER" id="PTHR17616:SF8">
    <property type="entry name" value="TRANSCRIPTIONAL COACTIVATOR YORKIE"/>
    <property type="match status" value="1"/>
</dbReference>
<dbReference type="PANTHER" id="PTHR17616">
    <property type="entry name" value="YES-ASSOCIATED PROTEIN YAP1 FAMILY MEMBER"/>
    <property type="match status" value="1"/>
</dbReference>
<dbReference type="Pfam" id="PF00168">
    <property type="entry name" value="C2"/>
    <property type="match status" value="1"/>
</dbReference>
<dbReference type="Pfam" id="PF00397">
    <property type="entry name" value="WW"/>
    <property type="match status" value="2"/>
</dbReference>
<dbReference type="SMART" id="SM00456">
    <property type="entry name" value="WW"/>
    <property type="match status" value="2"/>
</dbReference>
<dbReference type="SUPFAM" id="SSF49562">
    <property type="entry name" value="C2 domain (Calcium/lipid-binding domain, CaLB)"/>
    <property type="match status" value="1"/>
</dbReference>
<dbReference type="SUPFAM" id="SSF51045">
    <property type="entry name" value="WW domain"/>
    <property type="match status" value="2"/>
</dbReference>
<dbReference type="PROSITE" id="PS50004">
    <property type="entry name" value="C2"/>
    <property type="match status" value="1"/>
</dbReference>
<dbReference type="PROSITE" id="PS01159">
    <property type="entry name" value="WW_DOMAIN_1"/>
    <property type="match status" value="1"/>
</dbReference>
<dbReference type="PROSITE" id="PS50020">
    <property type="entry name" value="WW_DOMAIN_2"/>
    <property type="match status" value="2"/>
</dbReference>
<keyword id="KW-0112">Calmodulin-binding</keyword>
<keyword id="KW-0131">Cell cycle</keyword>
<keyword id="KW-0132">Cell division</keyword>
<keyword id="KW-0963">Cytoplasm</keyword>
<keyword id="KW-0206">Cytoskeleton</keyword>
<keyword id="KW-0539">Nucleus</keyword>
<keyword id="KW-1185">Reference proteome</keyword>
<keyword id="KW-0677">Repeat</keyword>
<comment type="function">
    <text evidence="4">Involved in regulation of actin cytoskeleton organization and cytokinesis.</text>
</comment>
<comment type="subunit">
    <text evidence="4">Interacts with calmodulin in the absence of Ca(2+).</text>
</comment>
<comment type="subcellular location">
    <subcellularLocation>
        <location evidence="4">Nucleus</location>
    </subcellularLocation>
    <subcellularLocation>
        <location evidence="4">Nucleus</location>
        <location evidence="4">Nucleolus</location>
    </subcellularLocation>
    <subcellularLocation>
        <location evidence="4">Cytoplasm</location>
        <location evidence="4">Cell cortex</location>
    </subcellularLocation>
    <subcellularLocation>
        <location evidence="4">Cytoplasm</location>
        <location evidence="4">Cytoskeleton</location>
    </subcellularLocation>
    <text evidence="4">In living cells localizes to the cell cortex and nucleus. In formaldehyde fixed cells localizes to the nucleolus.</text>
</comment>
<comment type="developmental stage">
    <text evidence="4">Expressed during vegetative growth. Expression decreases rapidly during early development and is not detected after 12 hours of development.</text>
</comment>
<comment type="disruption phenotype">
    <text evidence="4">Cells fail to complete the final step of cytokinesis and form multinucleated cells when grown on a solid surface. Null mutants show excessive accumulation of F-actin around the periphery of the ventral surface. When grown in suspension, mutants lacking dwwA complete cytokinesis normally. Mutants lacking the N-terminal C2 domain fail to localize to the cell cortex.</text>
</comment>
<gene>
    <name evidence="8" type="primary">dwwA</name>
    <name type="ORF">DDB_G0281827</name>
</gene>